<comment type="function">
    <text evidence="3">Aspartic protease that processes the lipase LipY and other PE_PGRS proteins. Can also cleave itself.</text>
</comment>
<comment type="subcellular location">
    <subcellularLocation>
        <location evidence="1">Secreted</location>
    </subcellularLocation>
    <subcellularLocation>
        <location evidence="1">Cell surface</location>
    </subcellularLocation>
    <text evidence="1">Secreted via the ESX-5 / type VII secretion system (T7SS).</text>
</comment>
<comment type="PTM">
    <text evidence="3">Undergoes auto-proteolytic processing.</text>
</comment>
<comment type="similarity">
    <text evidence="5">Belongs to the mycobacterial PE family. PGRS subfamily.</text>
</comment>
<protein>
    <recommendedName>
        <fullName evidence="4">PE cleavage protein A</fullName>
    </recommendedName>
    <alternativeName>
        <fullName evidence="5">PE-PGRS family protein PE_PGRS35</fullName>
    </alternativeName>
</protein>
<evidence type="ECO:0000250" key="1">
    <source>
        <dbReference type="UniProtKB" id="B2HE92"/>
    </source>
</evidence>
<evidence type="ECO:0000255" key="2"/>
<evidence type="ECO:0000269" key="3">
    <source>
    </source>
</evidence>
<evidence type="ECO:0000303" key="4">
    <source>
    </source>
</evidence>
<evidence type="ECO:0000305" key="5"/>
<feature type="chain" id="PRO_0000216166" description="PE cleavage protein A">
    <location>
        <begin position="1"/>
        <end position="558"/>
    </location>
</feature>
<feature type="domain" description="PE" evidence="2">
    <location>
        <begin position="1"/>
        <end position="93"/>
    </location>
</feature>
<feature type="active site" evidence="1">
    <location>
        <position position="297"/>
    </location>
</feature>
<organism>
    <name type="scientific">Mycobacterium tuberculosis (strain ATCC 25618 / H37Rv)</name>
    <dbReference type="NCBI Taxonomy" id="83332"/>
    <lineage>
        <taxon>Bacteria</taxon>
        <taxon>Bacillati</taxon>
        <taxon>Actinomycetota</taxon>
        <taxon>Actinomycetes</taxon>
        <taxon>Mycobacteriales</taxon>
        <taxon>Mycobacteriaceae</taxon>
        <taxon>Mycobacterium</taxon>
        <taxon>Mycobacterium tuberculosis complex</taxon>
    </lineage>
</organism>
<sequence>MSFLVVVPEFLTSAAADVENIGSTLRAANAAAAASTTALAAAGADEVSAAVAALFARFGQEYQAVSAQASAFHQQFVQTLNSASGSYAAAEATIASQLQTAQHDLLGAVNAPTETLLGRPLIGDGAPGTATSPNGGAGGLLYGNGGNGYSATASGVGGGAGGSAGLIGNGGAGGAGGPNAPGGAGGNGGWLLGNGGIGGPGGASSIPGMSGGAGGTGGAAGLLGWGANGGAGGLGDGVGVDRGTGGAGGRGGLLYGGYGVSGPGGDGRTVPLEIIHVTEPTVHANVNGGPTSTILVDTGSAGLVVSPEDVGGILGVLHMGLPTGLSISGYSGGLYYIFATYTTTVDFGNGIVTAPTAVNVVLLSIPTSPFAISTYFSALLADPTTTPFEAYFGAVGVDGVLGVGPNAVGPGPSIPTMALPGDLNQGVLIDAPAGELVFGPNPLPAPNVEVVGSPITTLYVKIDGGTPIPVPSIIDSGGVTGTIPSYVIGSGTLPANTNIEVYTSPGGDRLYAFNTNDYRPTVISSGLMNTGFLPFRFQPVYIDYSPSGIGTTVFDHPA</sequence>
<name>PECA_MYCTU</name>
<gene>
    <name evidence="4" type="primary">pecA</name>
    <name type="synonym">PE_PGRS35</name>
    <name type="ordered locus">Rv1983</name>
    <name type="ORF">MTCY39.36c</name>
</gene>
<accession>P9WIF1</accession>
<accession>L0T8F8</accession>
<accession>Q10873</accession>
<keyword id="KW-0064">Aspartyl protease</keyword>
<keyword id="KW-0378">Hydrolase</keyword>
<keyword id="KW-0645">Protease</keyword>
<keyword id="KW-1185">Reference proteome</keyword>
<keyword id="KW-0964">Secreted</keyword>
<proteinExistence type="evidence at protein level"/>
<dbReference type="EMBL" id="AL123456">
    <property type="protein sequence ID" value="CCP44753.1"/>
    <property type="molecule type" value="Genomic_DNA"/>
</dbReference>
<dbReference type="PIR" id="E70756">
    <property type="entry name" value="E70756"/>
</dbReference>
<dbReference type="RefSeq" id="WP_003899118.1">
    <property type="nucleotide sequence ID" value="NZ_KK339370.1"/>
</dbReference>
<dbReference type="RefSeq" id="YP_177854.1">
    <property type="nucleotide sequence ID" value="NC_000962.3"/>
</dbReference>
<dbReference type="SMR" id="P9WIF1"/>
<dbReference type="STRING" id="83332.Rv1983"/>
<dbReference type="PaxDb" id="83332-Rv1983"/>
<dbReference type="DNASU" id="885921"/>
<dbReference type="GeneID" id="885921"/>
<dbReference type="KEGG" id="mtu:Rv1983"/>
<dbReference type="KEGG" id="mtv:RVBD_1983"/>
<dbReference type="PATRIC" id="fig|83332.111.peg.2206"/>
<dbReference type="TubercuList" id="Rv1983"/>
<dbReference type="eggNOG" id="COG0657">
    <property type="taxonomic scope" value="Bacteria"/>
</dbReference>
<dbReference type="InParanoid" id="P9WIF1"/>
<dbReference type="OrthoDB" id="5190013at2"/>
<dbReference type="PhylomeDB" id="P9WIF1"/>
<dbReference type="Proteomes" id="UP000001584">
    <property type="component" value="Chromosome"/>
</dbReference>
<dbReference type="GO" id="GO:0009986">
    <property type="term" value="C:cell surface"/>
    <property type="evidence" value="ECO:0007669"/>
    <property type="project" value="UniProtKB-SubCell"/>
</dbReference>
<dbReference type="GO" id="GO:0005576">
    <property type="term" value="C:extracellular region"/>
    <property type="evidence" value="ECO:0007669"/>
    <property type="project" value="UniProtKB-SubCell"/>
</dbReference>
<dbReference type="GO" id="GO:0004190">
    <property type="term" value="F:aspartic-type endopeptidase activity"/>
    <property type="evidence" value="ECO:0007669"/>
    <property type="project" value="UniProtKB-KW"/>
</dbReference>
<dbReference type="GO" id="GO:0006508">
    <property type="term" value="P:proteolysis"/>
    <property type="evidence" value="ECO:0007669"/>
    <property type="project" value="UniProtKB-KW"/>
</dbReference>
<dbReference type="Gene3D" id="2.40.70.10">
    <property type="entry name" value="Acid Proteases"/>
    <property type="match status" value="1"/>
</dbReference>
<dbReference type="Gene3D" id="1.10.287.850">
    <property type="entry name" value="HP0062-like domain"/>
    <property type="match status" value="1"/>
</dbReference>
<dbReference type="InterPro" id="IPR000084">
    <property type="entry name" value="PE-PGRS_N"/>
</dbReference>
<dbReference type="InterPro" id="IPR048054">
    <property type="entry name" value="PecA_C"/>
</dbReference>
<dbReference type="InterPro" id="IPR021109">
    <property type="entry name" value="Peptidase_aspartic_dom_sf"/>
</dbReference>
<dbReference type="InterPro" id="IPR048996">
    <property type="entry name" value="PGRS_rpt"/>
</dbReference>
<dbReference type="NCBIfam" id="NF038019">
    <property type="entry name" value="PE_process_PecA"/>
    <property type="match status" value="1"/>
</dbReference>
<dbReference type="Pfam" id="PF00934">
    <property type="entry name" value="PE"/>
    <property type="match status" value="1"/>
</dbReference>
<dbReference type="Pfam" id="PF20729">
    <property type="entry name" value="PE-PGRS_C"/>
    <property type="match status" value="1"/>
</dbReference>
<dbReference type="Pfam" id="PF21526">
    <property type="entry name" value="PGRS"/>
    <property type="match status" value="1"/>
</dbReference>
<dbReference type="SUPFAM" id="SSF140459">
    <property type="entry name" value="PE/PPE dimer-like"/>
    <property type="match status" value="1"/>
</dbReference>
<reference key="1">
    <citation type="journal article" date="1998" name="Nature">
        <title>Deciphering the biology of Mycobacterium tuberculosis from the complete genome sequence.</title>
        <authorList>
            <person name="Cole S.T."/>
            <person name="Brosch R."/>
            <person name="Parkhill J."/>
            <person name="Garnier T."/>
            <person name="Churcher C.M."/>
            <person name="Harris D.E."/>
            <person name="Gordon S.V."/>
            <person name="Eiglmeier K."/>
            <person name="Gas S."/>
            <person name="Barry C.E. III"/>
            <person name="Tekaia F."/>
            <person name="Badcock K."/>
            <person name="Basham D."/>
            <person name="Brown D."/>
            <person name="Chillingworth T."/>
            <person name="Connor R."/>
            <person name="Davies R.M."/>
            <person name="Devlin K."/>
            <person name="Feltwell T."/>
            <person name="Gentles S."/>
            <person name="Hamlin N."/>
            <person name="Holroyd S."/>
            <person name="Hornsby T."/>
            <person name="Jagels K."/>
            <person name="Krogh A."/>
            <person name="McLean J."/>
            <person name="Moule S."/>
            <person name="Murphy L.D."/>
            <person name="Oliver S."/>
            <person name="Osborne J."/>
            <person name="Quail M.A."/>
            <person name="Rajandream M.A."/>
            <person name="Rogers J."/>
            <person name="Rutter S."/>
            <person name="Seeger K."/>
            <person name="Skelton S."/>
            <person name="Squares S."/>
            <person name="Squares R."/>
            <person name="Sulston J.E."/>
            <person name="Taylor K."/>
            <person name="Whitehead S."/>
            <person name="Barrell B.G."/>
        </authorList>
    </citation>
    <scope>NUCLEOTIDE SEQUENCE [LARGE SCALE GENOMIC DNA]</scope>
    <source>
        <strain>ATCC 25618 / H37Rv</strain>
    </source>
</reference>
<reference key="2">
    <citation type="journal article" date="2019" name="MBio">
        <title>Type VII secretion substrates of pathogenic Mycobacteria are processed by a surface protease.</title>
        <authorList>
            <person name="Burggraaf M.J."/>
            <person name="Speer A."/>
            <person name="Meijers A.S."/>
            <person name="Ummels R."/>
            <person name="van der Sar A.M."/>
            <person name="Korotkov K.V."/>
            <person name="Bitter W."/>
            <person name="Kuijl C."/>
        </authorList>
    </citation>
    <scope>FUNCTION</scope>
    <scope>PROTEOLYTIC CLEAVAGE</scope>
</reference>